<organism>
    <name type="scientific">Salinibacter ruber (strain DSM 13855 / M31)</name>
    <dbReference type="NCBI Taxonomy" id="309807"/>
    <lineage>
        <taxon>Bacteria</taxon>
        <taxon>Pseudomonadati</taxon>
        <taxon>Rhodothermota</taxon>
        <taxon>Rhodothermia</taxon>
        <taxon>Rhodothermales</taxon>
        <taxon>Salinibacteraceae</taxon>
        <taxon>Salinibacter</taxon>
    </lineage>
</organism>
<proteinExistence type="inferred from homology"/>
<keyword id="KW-0963">Cytoplasm</keyword>
<keyword id="KW-0378">Hydrolase</keyword>
<keyword id="KW-1185">Reference proteome</keyword>
<keyword id="KW-0694">RNA-binding</keyword>
<keyword id="KW-0820">tRNA-binding</keyword>
<name>PTH_SALRD</name>
<gene>
    <name evidence="1" type="primary">pth</name>
    <name type="ordered locus">SRU_0813</name>
</gene>
<evidence type="ECO:0000255" key="1">
    <source>
        <dbReference type="HAMAP-Rule" id="MF_00083"/>
    </source>
</evidence>
<sequence length="188" mass="20410">MSTPSLLAIGLGNPGAEYEDTRHNVGHQVIDGLSGRLDISLQHQSDALVGWGRYVDQKIGLAVPLTYMNRSGDAVAGLRAHYDLPIDRLLVIVDDLHLPVGTIRLRPTGSSGGHNGLAHVAQRLGTTEFSRLRVGIGNDFPEGRQSDYVLSPFTDEQRPAARSAREDAEDAVLTMARDDIDAAMNRFN</sequence>
<accession>Q2S4D2</accession>
<protein>
    <recommendedName>
        <fullName evidence="1">Peptidyl-tRNA hydrolase</fullName>
        <shortName evidence="1">Pth</shortName>
        <ecNumber evidence="1">3.1.1.29</ecNumber>
    </recommendedName>
</protein>
<comment type="function">
    <text evidence="1">Hydrolyzes ribosome-free peptidyl-tRNAs (with 1 or more amino acids incorporated), which drop off the ribosome during protein synthesis, or as a result of ribosome stalling.</text>
</comment>
<comment type="function">
    <text evidence="1">Catalyzes the release of premature peptidyl moieties from peptidyl-tRNA molecules trapped in stalled 50S ribosomal subunits, and thus maintains levels of free tRNAs and 50S ribosomes.</text>
</comment>
<comment type="catalytic activity">
    <reaction evidence="1">
        <text>an N-acyl-L-alpha-aminoacyl-tRNA + H2O = an N-acyl-L-amino acid + a tRNA + H(+)</text>
        <dbReference type="Rhea" id="RHEA:54448"/>
        <dbReference type="Rhea" id="RHEA-COMP:10123"/>
        <dbReference type="Rhea" id="RHEA-COMP:13883"/>
        <dbReference type="ChEBI" id="CHEBI:15377"/>
        <dbReference type="ChEBI" id="CHEBI:15378"/>
        <dbReference type="ChEBI" id="CHEBI:59874"/>
        <dbReference type="ChEBI" id="CHEBI:78442"/>
        <dbReference type="ChEBI" id="CHEBI:138191"/>
        <dbReference type="EC" id="3.1.1.29"/>
    </reaction>
</comment>
<comment type="subunit">
    <text evidence="1">Monomer.</text>
</comment>
<comment type="subcellular location">
    <subcellularLocation>
        <location evidence="1">Cytoplasm</location>
    </subcellularLocation>
</comment>
<comment type="similarity">
    <text evidence="1">Belongs to the PTH family.</text>
</comment>
<reference key="1">
    <citation type="journal article" date="2005" name="Proc. Natl. Acad. Sci. U.S.A.">
        <title>The genome of Salinibacter ruber: convergence and gene exchange among hyperhalophilic bacteria and archaea.</title>
        <authorList>
            <person name="Mongodin E.F."/>
            <person name="Nelson K.E."/>
            <person name="Daugherty S."/>
            <person name="DeBoy R.T."/>
            <person name="Wister J."/>
            <person name="Khouri H."/>
            <person name="Weidman J."/>
            <person name="Walsh D.A."/>
            <person name="Papke R.T."/>
            <person name="Sanchez Perez G."/>
            <person name="Sharma A.K."/>
            <person name="Nesbo C.L."/>
            <person name="MacLeod D."/>
            <person name="Bapteste E."/>
            <person name="Doolittle W.F."/>
            <person name="Charlebois R.L."/>
            <person name="Legault B."/>
            <person name="Rodriguez-Valera F."/>
        </authorList>
    </citation>
    <scope>NUCLEOTIDE SEQUENCE [LARGE SCALE GENOMIC DNA]</scope>
    <source>
        <strain>DSM 13855 / CECT 5946 / M31</strain>
    </source>
</reference>
<dbReference type="EC" id="3.1.1.29" evidence="1"/>
<dbReference type="EMBL" id="CP000159">
    <property type="protein sequence ID" value="ABC45122.1"/>
    <property type="molecule type" value="Genomic_DNA"/>
</dbReference>
<dbReference type="RefSeq" id="WP_011403578.1">
    <property type="nucleotide sequence ID" value="NC_007677.1"/>
</dbReference>
<dbReference type="RefSeq" id="YP_444949.1">
    <property type="nucleotide sequence ID" value="NC_007677.1"/>
</dbReference>
<dbReference type="SMR" id="Q2S4D2"/>
<dbReference type="STRING" id="309807.SRU_0813"/>
<dbReference type="EnsemblBacteria" id="ABC45122">
    <property type="protein sequence ID" value="ABC45122"/>
    <property type="gene ID" value="SRU_0813"/>
</dbReference>
<dbReference type="KEGG" id="sru:SRU_0813"/>
<dbReference type="PATRIC" id="fig|309807.25.peg.838"/>
<dbReference type="eggNOG" id="COG0193">
    <property type="taxonomic scope" value="Bacteria"/>
</dbReference>
<dbReference type="HOGENOM" id="CLU_062456_4_1_10"/>
<dbReference type="OrthoDB" id="9800507at2"/>
<dbReference type="Proteomes" id="UP000008674">
    <property type="component" value="Chromosome"/>
</dbReference>
<dbReference type="GO" id="GO:0005737">
    <property type="term" value="C:cytoplasm"/>
    <property type="evidence" value="ECO:0007669"/>
    <property type="project" value="UniProtKB-SubCell"/>
</dbReference>
<dbReference type="GO" id="GO:0004045">
    <property type="term" value="F:peptidyl-tRNA hydrolase activity"/>
    <property type="evidence" value="ECO:0007669"/>
    <property type="project" value="UniProtKB-UniRule"/>
</dbReference>
<dbReference type="GO" id="GO:0000049">
    <property type="term" value="F:tRNA binding"/>
    <property type="evidence" value="ECO:0007669"/>
    <property type="project" value="UniProtKB-UniRule"/>
</dbReference>
<dbReference type="GO" id="GO:0006515">
    <property type="term" value="P:protein quality control for misfolded or incompletely synthesized proteins"/>
    <property type="evidence" value="ECO:0007669"/>
    <property type="project" value="UniProtKB-UniRule"/>
</dbReference>
<dbReference type="GO" id="GO:0072344">
    <property type="term" value="P:rescue of stalled ribosome"/>
    <property type="evidence" value="ECO:0007669"/>
    <property type="project" value="UniProtKB-UniRule"/>
</dbReference>
<dbReference type="CDD" id="cd00462">
    <property type="entry name" value="PTH"/>
    <property type="match status" value="1"/>
</dbReference>
<dbReference type="FunFam" id="3.40.50.1470:FF:000001">
    <property type="entry name" value="Peptidyl-tRNA hydrolase"/>
    <property type="match status" value="1"/>
</dbReference>
<dbReference type="Gene3D" id="3.40.50.1470">
    <property type="entry name" value="Peptidyl-tRNA hydrolase"/>
    <property type="match status" value="1"/>
</dbReference>
<dbReference type="HAMAP" id="MF_00083">
    <property type="entry name" value="Pept_tRNA_hydro_bact"/>
    <property type="match status" value="1"/>
</dbReference>
<dbReference type="InterPro" id="IPR001328">
    <property type="entry name" value="Pept_tRNA_hydro"/>
</dbReference>
<dbReference type="InterPro" id="IPR018171">
    <property type="entry name" value="Pept_tRNA_hydro_CS"/>
</dbReference>
<dbReference type="InterPro" id="IPR036416">
    <property type="entry name" value="Pept_tRNA_hydro_sf"/>
</dbReference>
<dbReference type="NCBIfam" id="TIGR00447">
    <property type="entry name" value="pth"/>
    <property type="match status" value="1"/>
</dbReference>
<dbReference type="PANTHER" id="PTHR17224">
    <property type="entry name" value="PEPTIDYL-TRNA HYDROLASE"/>
    <property type="match status" value="1"/>
</dbReference>
<dbReference type="PANTHER" id="PTHR17224:SF1">
    <property type="entry name" value="PEPTIDYL-TRNA HYDROLASE"/>
    <property type="match status" value="1"/>
</dbReference>
<dbReference type="Pfam" id="PF01195">
    <property type="entry name" value="Pept_tRNA_hydro"/>
    <property type="match status" value="1"/>
</dbReference>
<dbReference type="SUPFAM" id="SSF53178">
    <property type="entry name" value="Peptidyl-tRNA hydrolase-like"/>
    <property type="match status" value="1"/>
</dbReference>
<dbReference type="PROSITE" id="PS01195">
    <property type="entry name" value="PEPT_TRNA_HYDROL_1"/>
    <property type="match status" value="1"/>
</dbReference>
<feature type="chain" id="PRO_0000264101" description="Peptidyl-tRNA hydrolase">
    <location>
        <begin position="1"/>
        <end position="188"/>
    </location>
</feature>
<feature type="active site" description="Proton acceptor" evidence="1">
    <location>
        <position position="23"/>
    </location>
</feature>
<feature type="binding site" evidence="1">
    <location>
        <position position="18"/>
    </location>
    <ligand>
        <name>tRNA</name>
        <dbReference type="ChEBI" id="CHEBI:17843"/>
    </ligand>
</feature>
<feature type="binding site" evidence="1">
    <location>
        <position position="67"/>
    </location>
    <ligand>
        <name>tRNA</name>
        <dbReference type="ChEBI" id="CHEBI:17843"/>
    </ligand>
</feature>
<feature type="binding site" evidence="1">
    <location>
        <position position="69"/>
    </location>
    <ligand>
        <name>tRNA</name>
        <dbReference type="ChEBI" id="CHEBI:17843"/>
    </ligand>
</feature>
<feature type="binding site" evidence="1">
    <location>
        <position position="115"/>
    </location>
    <ligand>
        <name>tRNA</name>
        <dbReference type="ChEBI" id="CHEBI:17843"/>
    </ligand>
</feature>
<feature type="site" description="Discriminates between blocked and unblocked aminoacyl-tRNA" evidence="1">
    <location>
        <position position="13"/>
    </location>
</feature>
<feature type="site" description="Stabilizes the basic form of H active site to accept a proton" evidence="1">
    <location>
        <position position="94"/>
    </location>
</feature>